<sequence length="223" mass="25914">MAGNKGRGRAAYTFNIEAVGFSKGEKLPDVVLKPPPLFPDTDYKPVPLKTGEGEEYMLALKQELRETMKRMPYFIETPEERQDIERYSKRYMKVYKEEWIPDWRRLPREMMPRNKCKKAGPKPKKAKDAGKGTPLTNTEDVLKKMEELEKRGDGEKSDEENEEKEGSKEKSKEGDDDDDDDAAEQEEYDEEEQEEENDYINSYFEDGDDFGADSDDNMDEATY</sequence>
<dbReference type="EMBL" id="U93868">
    <property type="protein sequence ID" value="AAB63676.1"/>
    <property type="status" value="ALT_FRAME"/>
    <property type="molecule type" value="mRNA"/>
</dbReference>
<dbReference type="EMBL" id="AK295434">
    <property type="protein sequence ID" value="BAG58376.1"/>
    <property type="molecule type" value="mRNA"/>
</dbReference>
<dbReference type="EMBL" id="AC027323">
    <property type="status" value="NOT_ANNOTATED_CDS"/>
    <property type="molecule type" value="Genomic_DNA"/>
</dbReference>
<dbReference type="EMBL" id="AC093510">
    <property type="status" value="NOT_ANNOTATED_CDS"/>
    <property type="molecule type" value="Genomic_DNA"/>
</dbReference>
<dbReference type="EMBL" id="CH471084">
    <property type="protein sequence ID" value="EAW95980.1"/>
    <property type="molecule type" value="Genomic_DNA"/>
</dbReference>
<dbReference type="CCDS" id="CCDS43337.1"/>
<dbReference type="RefSeq" id="NP_001357280.1">
    <property type="nucleotide sequence ID" value="NM_001370351.1"/>
</dbReference>
<dbReference type="RefSeq" id="NP_001357283.1">
    <property type="nucleotide sequence ID" value="NM_001370354.1"/>
</dbReference>
<dbReference type="RefSeq" id="NP_006458.2">
    <property type="nucleotide sequence ID" value="NM_006467.3"/>
</dbReference>
<dbReference type="RefSeq" id="XP_005248461.1">
    <property type="nucleotide sequence ID" value="XM_005248404.3"/>
</dbReference>
<dbReference type="RefSeq" id="XP_011541402.1">
    <property type="nucleotide sequence ID" value="XM_011543100.2"/>
</dbReference>
<dbReference type="RefSeq" id="XP_011541403.1">
    <property type="nucleotide sequence ID" value="XM_011543101.4"/>
</dbReference>
<dbReference type="RefSeq" id="XP_011541404.1">
    <property type="nucleotide sequence ID" value="XM_011543102.2"/>
</dbReference>
<dbReference type="RefSeq" id="XP_016864446.1">
    <property type="nucleotide sequence ID" value="XM_017008957.3"/>
</dbReference>
<dbReference type="RefSeq" id="XP_054207417.1">
    <property type="nucleotide sequence ID" value="XM_054351442.1"/>
</dbReference>
<dbReference type="RefSeq" id="XP_054207418.1">
    <property type="nucleotide sequence ID" value="XM_054351443.1"/>
</dbReference>
<dbReference type="PDB" id="7A6H">
    <property type="method" value="EM"/>
    <property type="resolution" value="3.30 A"/>
    <property type="chains" value="Q=1-223"/>
</dbReference>
<dbReference type="PDB" id="7AE1">
    <property type="method" value="EM"/>
    <property type="resolution" value="2.80 A"/>
    <property type="chains" value="Q=1-223"/>
</dbReference>
<dbReference type="PDB" id="7AE3">
    <property type="method" value="EM"/>
    <property type="resolution" value="3.10 A"/>
    <property type="chains" value="Q=1-223"/>
</dbReference>
<dbReference type="PDB" id="7AEA">
    <property type="method" value="EM"/>
    <property type="resolution" value="3.40 A"/>
    <property type="chains" value="Q=1-223"/>
</dbReference>
<dbReference type="PDB" id="7D58">
    <property type="method" value="EM"/>
    <property type="resolution" value="2.90 A"/>
    <property type="chains" value="Q=1-223"/>
</dbReference>
<dbReference type="PDB" id="7D59">
    <property type="method" value="EM"/>
    <property type="resolution" value="3.10 A"/>
    <property type="chains" value="Q=1-223"/>
</dbReference>
<dbReference type="PDB" id="7DN3">
    <property type="method" value="EM"/>
    <property type="resolution" value="3.50 A"/>
    <property type="chains" value="Q=1-223"/>
</dbReference>
<dbReference type="PDB" id="7DU2">
    <property type="method" value="EM"/>
    <property type="resolution" value="3.35 A"/>
    <property type="chains" value="Q=1-223"/>
</dbReference>
<dbReference type="PDB" id="7FJI">
    <property type="method" value="EM"/>
    <property type="resolution" value="3.60 A"/>
    <property type="chains" value="Q=1-223"/>
</dbReference>
<dbReference type="PDB" id="7FJJ">
    <property type="method" value="EM"/>
    <property type="resolution" value="3.60 A"/>
    <property type="chains" value="Q=1-223"/>
</dbReference>
<dbReference type="PDB" id="8ITY">
    <property type="method" value="EM"/>
    <property type="resolution" value="3.90 A"/>
    <property type="chains" value="Q=1-223"/>
</dbReference>
<dbReference type="PDB" id="8IUE">
    <property type="method" value="EM"/>
    <property type="resolution" value="4.10 A"/>
    <property type="chains" value="Q=1-223"/>
</dbReference>
<dbReference type="PDB" id="8IUH">
    <property type="method" value="EM"/>
    <property type="resolution" value="3.40 A"/>
    <property type="chains" value="Q=1-223"/>
</dbReference>
<dbReference type="PDB" id="9FSO">
    <property type="method" value="EM"/>
    <property type="resolution" value="3.28 A"/>
    <property type="chains" value="G=1-223"/>
</dbReference>
<dbReference type="PDB" id="9FSP">
    <property type="method" value="EM"/>
    <property type="resolution" value="3.39 A"/>
    <property type="chains" value="G=1-223"/>
</dbReference>
<dbReference type="PDB" id="9FSQ">
    <property type="method" value="EM"/>
    <property type="resolution" value="3.51 A"/>
    <property type="chains" value="G=1-223"/>
</dbReference>
<dbReference type="PDB" id="9FSR">
    <property type="method" value="EM"/>
    <property type="resolution" value="3.76 A"/>
    <property type="chains" value="G=1-223"/>
</dbReference>
<dbReference type="PDB" id="9FSS">
    <property type="method" value="EM"/>
    <property type="resolution" value="4.14 A"/>
    <property type="chains" value="G=1-223"/>
</dbReference>
<dbReference type="PDBsum" id="7A6H"/>
<dbReference type="PDBsum" id="7AE1"/>
<dbReference type="PDBsum" id="7AE3"/>
<dbReference type="PDBsum" id="7AEA"/>
<dbReference type="PDBsum" id="7D58"/>
<dbReference type="PDBsum" id="7D59"/>
<dbReference type="PDBsum" id="7DN3"/>
<dbReference type="PDBsum" id="7DU2"/>
<dbReference type="PDBsum" id="7FJI"/>
<dbReference type="PDBsum" id="7FJJ"/>
<dbReference type="PDBsum" id="8ITY"/>
<dbReference type="PDBsum" id="8IUE"/>
<dbReference type="PDBsum" id="8IUH"/>
<dbReference type="PDBsum" id="9FSO"/>
<dbReference type="PDBsum" id="9FSP"/>
<dbReference type="PDBsum" id="9FSQ"/>
<dbReference type="PDBsum" id="9FSR"/>
<dbReference type="PDBsum" id="9FSS"/>
<dbReference type="EMDB" id="EMD-11673"/>
<dbReference type="EMDB" id="EMD-11736"/>
<dbReference type="EMDB" id="EMD-11738"/>
<dbReference type="EMDB" id="EMD-11742"/>
<dbReference type="EMDB" id="EMD-30577"/>
<dbReference type="EMDB" id="EMD-30578"/>
<dbReference type="EMDB" id="EMD-30779"/>
<dbReference type="EMDB" id="EMD-30865"/>
<dbReference type="EMDB" id="EMD-31621"/>
<dbReference type="EMDB" id="EMD-31622"/>
<dbReference type="EMDB" id="EMD-35712"/>
<dbReference type="EMDB" id="EMD-35719"/>
<dbReference type="EMDB" id="EMD-35722"/>
<dbReference type="EMDB" id="EMD-50730"/>
<dbReference type="EMDB" id="EMD-50731"/>
<dbReference type="EMDB" id="EMD-50732"/>
<dbReference type="EMDB" id="EMD-50733"/>
<dbReference type="EMDB" id="EMD-50734"/>
<dbReference type="SMR" id="O15318"/>
<dbReference type="BioGRID" id="115867">
    <property type="interactions" value="52"/>
</dbReference>
<dbReference type="ComplexPortal" id="CPX-2393">
    <property type="entry name" value="DNA-directed RNA polymerase III complex, POLR3G variant"/>
</dbReference>
<dbReference type="CORUM" id="O15318"/>
<dbReference type="DIP" id="DIP-59079N"/>
<dbReference type="FunCoup" id="O15318">
    <property type="interactions" value="2907"/>
</dbReference>
<dbReference type="IntAct" id="O15318">
    <property type="interactions" value="30"/>
</dbReference>
<dbReference type="STRING" id="9606.ENSP00000498469"/>
<dbReference type="iPTMnet" id="O15318"/>
<dbReference type="PhosphoSitePlus" id="O15318"/>
<dbReference type="BioMuta" id="POLR3G"/>
<dbReference type="jPOST" id="O15318"/>
<dbReference type="MassIVE" id="O15318"/>
<dbReference type="PaxDb" id="9606-ENSP00000382058"/>
<dbReference type="PeptideAtlas" id="O15318"/>
<dbReference type="ProteomicsDB" id="48580"/>
<dbReference type="Pumba" id="O15318"/>
<dbReference type="Antibodypedia" id="4114">
    <property type="antibodies" value="117 antibodies from 25 providers"/>
</dbReference>
<dbReference type="DNASU" id="10622"/>
<dbReference type="Ensembl" id="ENST00000504930.5">
    <property type="protein sequence ID" value="ENSP00000421637.1"/>
    <property type="gene ID" value="ENSG00000113356.13"/>
</dbReference>
<dbReference type="Ensembl" id="ENST00000651687.1">
    <property type="protein sequence ID" value="ENSP00000498469.1"/>
    <property type="gene ID" value="ENSG00000113356.13"/>
</dbReference>
<dbReference type="GeneID" id="10622"/>
<dbReference type="KEGG" id="hsa:10622"/>
<dbReference type="MANE-Select" id="ENST00000651687.1">
    <property type="protein sequence ID" value="ENSP00000498469.1"/>
    <property type="RefSeq nucleotide sequence ID" value="NM_006467.3"/>
    <property type="RefSeq protein sequence ID" value="NP_006458.2"/>
</dbReference>
<dbReference type="UCSC" id="uc003kjq.3">
    <property type="organism name" value="human"/>
</dbReference>
<dbReference type="AGR" id="HGNC:30075"/>
<dbReference type="CTD" id="10622"/>
<dbReference type="DisGeNET" id="10622"/>
<dbReference type="GeneCards" id="POLR3G"/>
<dbReference type="HGNC" id="HGNC:30075">
    <property type="gene designation" value="POLR3G"/>
</dbReference>
<dbReference type="HPA" id="ENSG00000113356">
    <property type="expression patterns" value="Low tissue specificity"/>
</dbReference>
<dbReference type="MIM" id="617456">
    <property type="type" value="gene"/>
</dbReference>
<dbReference type="neXtProt" id="NX_O15318"/>
<dbReference type="OpenTargets" id="ENSG00000113356"/>
<dbReference type="PharmGKB" id="PA134986024"/>
<dbReference type="VEuPathDB" id="HostDB:ENSG00000113356"/>
<dbReference type="eggNOG" id="ENOG502RY1A">
    <property type="taxonomic scope" value="Eukaryota"/>
</dbReference>
<dbReference type="GeneTree" id="ENSGT00940000164875"/>
<dbReference type="HOGENOM" id="CLU_084309_0_0_1"/>
<dbReference type="InParanoid" id="O15318"/>
<dbReference type="OMA" id="MPRKKCR"/>
<dbReference type="OrthoDB" id="5377312at2759"/>
<dbReference type="PAN-GO" id="O15318">
    <property type="GO annotations" value="2 GO annotations based on evolutionary models"/>
</dbReference>
<dbReference type="PhylomeDB" id="O15318"/>
<dbReference type="TreeFam" id="TF103052"/>
<dbReference type="PathwayCommons" id="O15318"/>
<dbReference type="Reactome" id="R-HSA-1834949">
    <property type="pathway name" value="Cytosolic sensors of pathogen-associated DNA"/>
</dbReference>
<dbReference type="Reactome" id="R-HSA-73780">
    <property type="pathway name" value="RNA Polymerase III Chain Elongation"/>
</dbReference>
<dbReference type="Reactome" id="R-HSA-73980">
    <property type="pathway name" value="RNA Polymerase III Transcription Termination"/>
</dbReference>
<dbReference type="Reactome" id="R-HSA-749476">
    <property type="pathway name" value="RNA Polymerase III Abortive And Retractive Initiation"/>
</dbReference>
<dbReference type="Reactome" id="R-HSA-76061">
    <property type="pathway name" value="RNA Polymerase III Transcription Initiation From Type 1 Promoter"/>
</dbReference>
<dbReference type="Reactome" id="R-HSA-76066">
    <property type="pathway name" value="RNA Polymerase III Transcription Initiation From Type 2 Promoter"/>
</dbReference>
<dbReference type="Reactome" id="R-HSA-76071">
    <property type="pathway name" value="RNA Polymerase III Transcription Initiation From Type 3 Promoter"/>
</dbReference>
<dbReference type="SignaLink" id="O15318"/>
<dbReference type="SIGNOR" id="O15318"/>
<dbReference type="BioGRID-ORCS" id="10622">
    <property type="hits" value="38 hits in 1088 CRISPR screens"/>
</dbReference>
<dbReference type="ChiTaRS" id="POLR3G">
    <property type="organism name" value="human"/>
</dbReference>
<dbReference type="GenomeRNAi" id="10622"/>
<dbReference type="Pharos" id="O15318">
    <property type="development level" value="Tbio"/>
</dbReference>
<dbReference type="PRO" id="PR:O15318"/>
<dbReference type="Proteomes" id="UP000005640">
    <property type="component" value="Chromosome 5"/>
</dbReference>
<dbReference type="RNAct" id="O15318">
    <property type="molecule type" value="protein"/>
</dbReference>
<dbReference type="Bgee" id="ENSG00000113356">
    <property type="expression patterns" value="Expressed in dorsal root ganglion and 140 other cell types or tissues"/>
</dbReference>
<dbReference type="ExpressionAtlas" id="O15318">
    <property type="expression patterns" value="baseline and differential"/>
</dbReference>
<dbReference type="GO" id="GO:0005829">
    <property type="term" value="C:cytosol"/>
    <property type="evidence" value="ECO:0000314"/>
    <property type="project" value="HPA"/>
</dbReference>
<dbReference type="GO" id="GO:0016604">
    <property type="term" value="C:nuclear body"/>
    <property type="evidence" value="ECO:0000314"/>
    <property type="project" value="HPA"/>
</dbReference>
<dbReference type="GO" id="GO:0005654">
    <property type="term" value="C:nucleoplasm"/>
    <property type="evidence" value="ECO:0000314"/>
    <property type="project" value="HPA"/>
</dbReference>
<dbReference type="GO" id="GO:0005634">
    <property type="term" value="C:nucleus"/>
    <property type="evidence" value="ECO:0000314"/>
    <property type="project" value="UniProtKB"/>
</dbReference>
<dbReference type="GO" id="GO:0005666">
    <property type="term" value="C:RNA polymerase III complex"/>
    <property type="evidence" value="ECO:0000314"/>
    <property type="project" value="UniProtKB"/>
</dbReference>
<dbReference type="GO" id="GO:0003682">
    <property type="term" value="F:chromatin binding"/>
    <property type="evidence" value="ECO:0000314"/>
    <property type="project" value="MGI"/>
</dbReference>
<dbReference type="GO" id="GO:0003899">
    <property type="term" value="F:DNA-directed RNA polymerase activity"/>
    <property type="evidence" value="ECO:0000304"/>
    <property type="project" value="ProtInc"/>
</dbReference>
<dbReference type="GO" id="GO:0008283">
    <property type="term" value="P:cell population proliferation"/>
    <property type="evidence" value="ECO:0000270"/>
    <property type="project" value="MGI"/>
</dbReference>
<dbReference type="GO" id="GO:0051607">
    <property type="term" value="P:defense response to virus"/>
    <property type="evidence" value="ECO:0007669"/>
    <property type="project" value="UniProtKB-KW"/>
</dbReference>
<dbReference type="GO" id="GO:0045087">
    <property type="term" value="P:innate immune response"/>
    <property type="evidence" value="ECO:0007669"/>
    <property type="project" value="UniProtKB-KW"/>
</dbReference>
<dbReference type="GO" id="GO:0045089">
    <property type="term" value="P:positive regulation of innate immune response"/>
    <property type="evidence" value="ECO:0000315"/>
    <property type="project" value="UniProtKB"/>
</dbReference>
<dbReference type="GO" id="GO:0032728">
    <property type="term" value="P:positive regulation of interferon-beta production"/>
    <property type="evidence" value="ECO:0000315"/>
    <property type="project" value="UniProtKB"/>
</dbReference>
<dbReference type="GO" id="GO:0006359">
    <property type="term" value="P:regulation of transcription by RNA polymerase III"/>
    <property type="evidence" value="ECO:0000304"/>
    <property type="project" value="ProtInc"/>
</dbReference>
<dbReference type="GO" id="GO:0006383">
    <property type="term" value="P:transcription by RNA polymerase III"/>
    <property type="evidence" value="ECO:0000314"/>
    <property type="project" value="UniProtKB"/>
</dbReference>
<dbReference type="InterPro" id="IPR024661">
    <property type="entry name" value="RNA_pol_III_Rpc31"/>
</dbReference>
<dbReference type="PANTHER" id="PTHR15367">
    <property type="entry name" value="DNA-DIRECTED RNA POLYMERASE III"/>
    <property type="match status" value="1"/>
</dbReference>
<dbReference type="PANTHER" id="PTHR15367:SF3">
    <property type="entry name" value="DNA-DIRECTED RNA POLYMERASE III SUBUNIT RPC7"/>
    <property type="match status" value="1"/>
</dbReference>
<dbReference type="Pfam" id="PF11705">
    <property type="entry name" value="RNA_pol_3_Rpc31"/>
    <property type="match status" value="1"/>
</dbReference>
<dbReference type="PIRSF" id="PIRSF000777">
    <property type="entry name" value="RNA_polIII_C31"/>
    <property type="match status" value="1"/>
</dbReference>
<gene>
    <name evidence="23" type="primary">POLR3G</name>
</gene>
<keyword id="KW-0002">3D-structure</keyword>
<keyword id="KW-0051">Antiviral defense</keyword>
<keyword id="KW-0963">Cytoplasm</keyword>
<keyword id="KW-0240">DNA-directed RNA polymerase</keyword>
<keyword id="KW-0391">Immunity</keyword>
<keyword id="KW-0399">Innate immunity</keyword>
<keyword id="KW-0539">Nucleus</keyword>
<keyword id="KW-0597">Phosphoprotein</keyword>
<keyword id="KW-1267">Proteomics identification</keyword>
<keyword id="KW-1185">Reference proteome</keyword>
<keyword id="KW-0804">Transcription</keyword>
<protein>
    <recommendedName>
        <fullName>DNA-directed RNA polymerase III subunit RPC7</fullName>
        <shortName>RNA polymerase III subunit C7</shortName>
    </recommendedName>
    <alternativeName>
        <fullName>DNA-directed RNA polymerase III subunit G</fullName>
    </alternativeName>
    <alternativeName>
        <fullName>RNA polymerase III 32 kDa apha subunit</fullName>
        <shortName evidence="21">RPC32-alpha</shortName>
    </alternativeName>
    <alternativeName>
        <fullName>RNA polymerase III 32 kDa subunit</fullName>
        <shortName>RPC32</shortName>
    </alternativeName>
</protein>
<feature type="chain" id="PRO_0000073978" description="DNA-directed RNA polymerase III subunit RPC7">
    <location>
        <begin position="1"/>
        <end position="223"/>
    </location>
</feature>
<feature type="region of interest" description="Disordered" evidence="3">
    <location>
        <begin position="110"/>
        <end position="223"/>
    </location>
</feature>
<feature type="compositionally biased region" description="Basic residues" evidence="3">
    <location>
        <begin position="114"/>
        <end position="125"/>
    </location>
</feature>
<feature type="compositionally biased region" description="Basic and acidic residues" evidence="3">
    <location>
        <begin position="140"/>
        <end position="155"/>
    </location>
</feature>
<feature type="compositionally biased region" description="Basic and acidic residues" evidence="3">
    <location>
        <begin position="164"/>
        <end position="173"/>
    </location>
</feature>
<feature type="compositionally biased region" description="Acidic residues" evidence="3">
    <location>
        <begin position="174"/>
        <end position="198"/>
    </location>
</feature>
<feature type="compositionally biased region" description="Acidic residues" evidence="3">
    <location>
        <begin position="205"/>
        <end position="223"/>
    </location>
</feature>
<feature type="modified residue" description="Phosphothreonine" evidence="24 27">
    <location>
        <position position="133"/>
    </location>
</feature>
<feature type="modified residue" description="Phosphoserine" evidence="25 26">
    <location>
        <position position="157"/>
    </location>
</feature>
<feature type="sequence conflict" description="In Ref. 1; AAB63676." evidence="22" ref="1">
    <original>K</original>
    <variation>Q</variation>
    <location>
        <position position="96"/>
    </location>
</feature>
<feature type="sequence conflict" description="In Ref. 1; AAB63676." evidence="22" ref="1">
    <original>E</original>
    <variation>V</variation>
    <location>
        <position position="146"/>
    </location>
</feature>
<feature type="helix" evidence="28">
    <location>
        <begin position="16"/>
        <end position="19"/>
    </location>
</feature>
<feature type="strand" evidence="28">
    <location>
        <begin position="22"/>
        <end position="24"/>
    </location>
</feature>
<feature type="strand" evidence="31">
    <location>
        <begin position="26"/>
        <end position="28"/>
    </location>
</feature>
<feature type="strand" evidence="31">
    <location>
        <begin position="41"/>
        <end position="43"/>
    </location>
</feature>
<feature type="turn" evidence="28">
    <location>
        <begin position="52"/>
        <end position="55"/>
    </location>
</feature>
<feature type="helix" evidence="28">
    <location>
        <begin position="56"/>
        <end position="68"/>
    </location>
</feature>
<feature type="strand" evidence="29">
    <location>
        <begin position="71"/>
        <end position="74"/>
    </location>
</feature>
<feature type="helix" evidence="28">
    <location>
        <begin position="87"/>
        <end position="89"/>
    </location>
</feature>
<feature type="turn" evidence="28">
    <location>
        <begin position="90"/>
        <end position="92"/>
    </location>
</feature>
<feature type="turn" evidence="28">
    <location>
        <begin position="103"/>
        <end position="105"/>
    </location>
</feature>
<feature type="helix" evidence="28">
    <location>
        <begin position="108"/>
        <end position="110"/>
    </location>
</feature>
<feature type="helix" evidence="30">
    <location>
        <begin position="190"/>
        <end position="193"/>
    </location>
</feature>
<feature type="turn" evidence="30">
    <location>
        <begin position="198"/>
        <end position="200"/>
    </location>
</feature>
<name>RPC7_HUMAN</name>
<reference key="1">
    <citation type="journal article" date="1997" name="Genes Dev.">
        <title>Three human RNA polymerase III-specific subunits form a subcomplex with a selective function in specific transcription initiation.</title>
        <authorList>
            <person name="Wang Z."/>
            <person name="Roeder R.G."/>
        </authorList>
    </citation>
    <scope>NUCLEOTIDE SEQUENCE [MRNA]</scope>
    <scope>INTERACTION WITH POLR3C AND POLR3F</scope>
    <source>
        <tissue>Cervix carcinoma</tissue>
    </source>
</reference>
<reference key="2">
    <citation type="journal article" date="2004" name="Nat. Genet.">
        <title>Complete sequencing and characterization of 21,243 full-length human cDNAs.</title>
        <authorList>
            <person name="Ota T."/>
            <person name="Suzuki Y."/>
            <person name="Nishikawa T."/>
            <person name="Otsuki T."/>
            <person name="Sugiyama T."/>
            <person name="Irie R."/>
            <person name="Wakamatsu A."/>
            <person name="Hayashi K."/>
            <person name="Sato H."/>
            <person name="Nagai K."/>
            <person name="Kimura K."/>
            <person name="Makita H."/>
            <person name="Sekine M."/>
            <person name="Obayashi M."/>
            <person name="Nishi T."/>
            <person name="Shibahara T."/>
            <person name="Tanaka T."/>
            <person name="Ishii S."/>
            <person name="Yamamoto J."/>
            <person name="Saito K."/>
            <person name="Kawai Y."/>
            <person name="Isono Y."/>
            <person name="Nakamura Y."/>
            <person name="Nagahari K."/>
            <person name="Murakami K."/>
            <person name="Yasuda T."/>
            <person name="Iwayanagi T."/>
            <person name="Wagatsuma M."/>
            <person name="Shiratori A."/>
            <person name="Sudo H."/>
            <person name="Hosoiri T."/>
            <person name="Kaku Y."/>
            <person name="Kodaira H."/>
            <person name="Kondo H."/>
            <person name="Sugawara M."/>
            <person name="Takahashi M."/>
            <person name="Kanda K."/>
            <person name="Yokoi T."/>
            <person name="Furuya T."/>
            <person name="Kikkawa E."/>
            <person name="Omura Y."/>
            <person name="Abe K."/>
            <person name="Kamihara K."/>
            <person name="Katsuta N."/>
            <person name="Sato K."/>
            <person name="Tanikawa M."/>
            <person name="Yamazaki M."/>
            <person name="Ninomiya K."/>
            <person name="Ishibashi T."/>
            <person name="Yamashita H."/>
            <person name="Murakawa K."/>
            <person name="Fujimori K."/>
            <person name="Tanai H."/>
            <person name="Kimata M."/>
            <person name="Watanabe M."/>
            <person name="Hiraoka S."/>
            <person name="Chiba Y."/>
            <person name="Ishida S."/>
            <person name="Ono Y."/>
            <person name="Takiguchi S."/>
            <person name="Watanabe S."/>
            <person name="Yosida M."/>
            <person name="Hotuta T."/>
            <person name="Kusano J."/>
            <person name="Kanehori K."/>
            <person name="Takahashi-Fujii A."/>
            <person name="Hara H."/>
            <person name="Tanase T.-O."/>
            <person name="Nomura Y."/>
            <person name="Togiya S."/>
            <person name="Komai F."/>
            <person name="Hara R."/>
            <person name="Takeuchi K."/>
            <person name="Arita M."/>
            <person name="Imose N."/>
            <person name="Musashino K."/>
            <person name="Yuuki H."/>
            <person name="Oshima A."/>
            <person name="Sasaki N."/>
            <person name="Aotsuka S."/>
            <person name="Yoshikawa Y."/>
            <person name="Matsunawa H."/>
            <person name="Ichihara T."/>
            <person name="Shiohata N."/>
            <person name="Sano S."/>
            <person name="Moriya S."/>
            <person name="Momiyama H."/>
            <person name="Satoh N."/>
            <person name="Takami S."/>
            <person name="Terashima Y."/>
            <person name="Suzuki O."/>
            <person name="Nakagawa S."/>
            <person name="Senoh A."/>
            <person name="Mizoguchi H."/>
            <person name="Goto Y."/>
            <person name="Shimizu F."/>
            <person name="Wakebe H."/>
            <person name="Hishigaki H."/>
            <person name="Watanabe T."/>
            <person name="Sugiyama A."/>
            <person name="Takemoto M."/>
            <person name="Kawakami B."/>
            <person name="Yamazaki M."/>
            <person name="Watanabe K."/>
            <person name="Kumagai A."/>
            <person name="Itakura S."/>
            <person name="Fukuzumi Y."/>
            <person name="Fujimori Y."/>
            <person name="Komiyama M."/>
            <person name="Tashiro H."/>
            <person name="Tanigami A."/>
            <person name="Fujiwara T."/>
            <person name="Ono T."/>
            <person name="Yamada K."/>
            <person name="Fujii Y."/>
            <person name="Ozaki K."/>
            <person name="Hirao M."/>
            <person name="Ohmori Y."/>
            <person name="Kawabata A."/>
            <person name="Hikiji T."/>
            <person name="Kobatake N."/>
            <person name="Inagaki H."/>
            <person name="Ikema Y."/>
            <person name="Okamoto S."/>
            <person name="Okitani R."/>
            <person name="Kawakami T."/>
            <person name="Noguchi S."/>
            <person name="Itoh T."/>
            <person name="Shigeta K."/>
            <person name="Senba T."/>
            <person name="Matsumura K."/>
            <person name="Nakajima Y."/>
            <person name="Mizuno T."/>
            <person name="Morinaga M."/>
            <person name="Sasaki M."/>
            <person name="Togashi T."/>
            <person name="Oyama M."/>
            <person name="Hata H."/>
            <person name="Watanabe M."/>
            <person name="Komatsu T."/>
            <person name="Mizushima-Sugano J."/>
            <person name="Satoh T."/>
            <person name="Shirai Y."/>
            <person name="Takahashi Y."/>
            <person name="Nakagawa K."/>
            <person name="Okumura K."/>
            <person name="Nagase T."/>
            <person name="Nomura N."/>
            <person name="Kikuchi H."/>
            <person name="Masuho Y."/>
            <person name="Yamashita R."/>
            <person name="Nakai K."/>
            <person name="Yada T."/>
            <person name="Nakamura Y."/>
            <person name="Ohara O."/>
            <person name="Isogai T."/>
            <person name="Sugano S."/>
        </authorList>
    </citation>
    <scope>NUCLEOTIDE SEQUENCE [LARGE SCALE MRNA]</scope>
    <source>
        <tissue>Corpus callosum</tissue>
    </source>
</reference>
<reference key="3">
    <citation type="journal article" date="2004" name="Nature">
        <title>The DNA sequence and comparative analysis of human chromosome 5.</title>
        <authorList>
            <person name="Schmutz J."/>
            <person name="Martin J."/>
            <person name="Terry A."/>
            <person name="Couronne O."/>
            <person name="Grimwood J."/>
            <person name="Lowry S."/>
            <person name="Gordon L.A."/>
            <person name="Scott D."/>
            <person name="Xie G."/>
            <person name="Huang W."/>
            <person name="Hellsten U."/>
            <person name="Tran-Gyamfi M."/>
            <person name="She X."/>
            <person name="Prabhakar S."/>
            <person name="Aerts A."/>
            <person name="Altherr M."/>
            <person name="Bajorek E."/>
            <person name="Black S."/>
            <person name="Branscomb E."/>
            <person name="Caoile C."/>
            <person name="Challacombe J.F."/>
            <person name="Chan Y.M."/>
            <person name="Denys M."/>
            <person name="Detter J.C."/>
            <person name="Escobar J."/>
            <person name="Flowers D."/>
            <person name="Fotopulos D."/>
            <person name="Glavina T."/>
            <person name="Gomez M."/>
            <person name="Gonzales E."/>
            <person name="Goodstein D."/>
            <person name="Grigoriev I."/>
            <person name="Groza M."/>
            <person name="Hammon N."/>
            <person name="Hawkins T."/>
            <person name="Haydu L."/>
            <person name="Israni S."/>
            <person name="Jett J."/>
            <person name="Kadner K."/>
            <person name="Kimball H."/>
            <person name="Kobayashi A."/>
            <person name="Lopez F."/>
            <person name="Lou Y."/>
            <person name="Martinez D."/>
            <person name="Medina C."/>
            <person name="Morgan J."/>
            <person name="Nandkeshwar R."/>
            <person name="Noonan J.P."/>
            <person name="Pitluck S."/>
            <person name="Pollard M."/>
            <person name="Predki P."/>
            <person name="Priest J."/>
            <person name="Ramirez L."/>
            <person name="Retterer J."/>
            <person name="Rodriguez A."/>
            <person name="Rogers S."/>
            <person name="Salamov A."/>
            <person name="Salazar A."/>
            <person name="Thayer N."/>
            <person name="Tice H."/>
            <person name="Tsai M."/>
            <person name="Ustaszewska A."/>
            <person name="Vo N."/>
            <person name="Wheeler J."/>
            <person name="Wu K."/>
            <person name="Yang J."/>
            <person name="Dickson M."/>
            <person name="Cheng J.-F."/>
            <person name="Eichler E.E."/>
            <person name="Olsen A."/>
            <person name="Pennacchio L.A."/>
            <person name="Rokhsar D.S."/>
            <person name="Richardson P."/>
            <person name="Lucas S.M."/>
            <person name="Myers R.M."/>
            <person name="Rubin E.M."/>
        </authorList>
    </citation>
    <scope>NUCLEOTIDE SEQUENCE [LARGE SCALE GENOMIC DNA]</scope>
</reference>
<reference key="4">
    <citation type="submission" date="2005-07" db="EMBL/GenBank/DDBJ databases">
        <authorList>
            <person name="Mural R.J."/>
            <person name="Istrail S."/>
            <person name="Sutton G.G."/>
            <person name="Florea L."/>
            <person name="Halpern A.L."/>
            <person name="Mobarry C.M."/>
            <person name="Lippert R."/>
            <person name="Walenz B."/>
            <person name="Shatkay H."/>
            <person name="Dew I."/>
            <person name="Miller J.R."/>
            <person name="Flanigan M.J."/>
            <person name="Edwards N.J."/>
            <person name="Bolanos R."/>
            <person name="Fasulo D."/>
            <person name="Halldorsson B.V."/>
            <person name="Hannenhalli S."/>
            <person name="Turner R."/>
            <person name="Yooseph S."/>
            <person name="Lu F."/>
            <person name="Nusskern D.R."/>
            <person name="Shue B.C."/>
            <person name="Zheng X.H."/>
            <person name="Zhong F."/>
            <person name="Delcher A.L."/>
            <person name="Huson D.H."/>
            <person name="Kravitz S.A."/>
            <person name="Mouchard L."/>
            <person name="Reinert K."/>
            <person name="Remington K.A."/>
            <person name="Clark A.G."/>
            <person name="Waterman M.S."/>
            <person name="Eichler E.E."/>
            <person name="Adams M.D."/>
            <person name="Hunkapiller M.W."/>
            <person name="Myers E.W."/>
            <person name="Venter J.C."/>
        </authorList>
    </citation>
    <scope>NUCLEOTIDE SEQUENCE [LARGE SCALE GENOMIC DNA]</scope>
</reference>
<reference key="5">
    <citation type="journal article" date="2002" name="Mol. Cell. Biol.">
        <title>Characterization of human RNA polymerase III identifies orthologues for Saccharomyces cerevisiae RNA polymerase III subunits.</title>
        <authorList>
            <person name="Hu P."/>
            <person name="Wu S."/>
            <person name="Sun Y."/>
            <person name="Yuan C.-C."/>
            <person name="Kobayashi R."/>
            <person name="Myers M.P."/>
            <person name="Hernandez N."/>
        </authorList>
    </citation>
    <scope>IDENTIFICATION IN THE RNA POL III COMPLEX</scope>
    <scope>IDENTIFICATION BY MASS SPECTROMETRY</scope>
</reference>
<reference key="6">
    <citation type="journal article" date="2008" name="Proc. Natl. Acad. Sci. U.S.A.">
        <title>A quantitative atlas of mitotic phosphorylation.</title>
        <authorList>
            <person name="Dephoure N."/>
            <person name="Zhou C."/>
            <person name="Villen J."/>
            <person name="Beausoleil S.A."/>
            <person name="Bakalarski C.E."/>
            <person name="Elledge S.J."/>
            <person name="Gygi S.P."/>
        </authorList>
    </citation>
    <scope>PHOSPHORYLATION [LARGE SCALE ANALYSIS] AT THR-133</scope>
    <scope>IDENTIFICATION BY MASS SPECTROMETRY [LARGE SCALE ANALYSIS]</scope>
    <source>
        <tissue>Cervix carcinoma</tissue>
    </source>
</reference>
<reference key="7">
    <citation type="journal article" date="2009" name="Cell">
        <title>RNA polymerase III detects cytosolic DNA and induces type I interferons through the RIG-I pathway.</title>
        <authorList>
            <person name="Chiu Y.-H."/>
            <person name="Macmillan J.B."/>
            <person name="Chen Z.J."/>
        </authorList>
    </citation>
    <scope>FUNCTION</scope>
</reference>
<reference key="8">
    <citation type="journal article" date="2009" name="Nat. Immunol.">
        <title>RIG-I-dependent sensing of poly(dA:dT) through the induction of an RNA polymerase III-transcribed RNA intermediate.</title>
        <authorList>
            <person name="Ablasser A."/>
            <person name="Bauernfeind F."/>
            <person name="Hartmann G."/>
            <person name="Latz E."/>
            <person name="Fitzgerald K.A."/>
            <person name="Hornung V."/>
        </authorList>
    </citation>
    <scope>FUNCTION</scope>
</reference>
<reference key="9">
    <citation type="journal article" date="2010" name="Genome Res.">
        <title>Defining the RNA polymerase III transcriptome: Genome-wide localization of the RNA polymerase III transcription machinery in human cells.</title>
        <authorList>
            <person name="Canella D."/>
            <person name="Praz V."/>
            <person name="Reina J.H."/>
            <person name="Cousin P."/>
            <person name="Hernandez N."/>
        </authorList>
    </citation>
    <scope>FUNCTION OF POL III</scope>
</reference>
<reference key="10">
    <citation type="journal article" date="2010" name="Proc. Natl. Acad. Sci. U.S.A.">
        <title>Two isoforms of human RNA polymerase III with specific functions in cell growth and transformation.</title>
        <authorList>
            <person name="Haurie V."/>
            <person name="Durrieu-Gaillard S."/>
            <person name="Dumay-Odelot H."/>
            <person name="Da Silva D."/>
            <person name="Rey C."/>
            <person name="Prochazkova M."/>
            <person name="Roeder R.G."/>
            <person name="Besser D."/>
            <person name="Teichmann M."/>
        </authorList>
    </citation>
    <scope>FUNCTION</scope>
    <scope>SUBCELLULAR LOCATION</scope>
    <scope>TISSUE SPECIFICITY</scope>
</reference>
<reference key="11">
    <citation type="journal article" date="2010" name="Sci. Signal.">
        <title>Quantitative phosphoproteomics reveals widespread full phosphorylation site occupancy during mitosis.</title>
        <authorList>
            <person name="Olsen J.V."/>
            <person name="Vermeulen M."/>
            <person name="Santamaria A."/>
            <person name="Kumar C."/>
            <person name="Miller M.L."/>
            <person name="Jensen L.J."/>
            <person name="Gnad F."/>
            <person name="Cox J."/>
            <person name="Jensen T.S."/>
            <person name="Nigg E.A."/>
            <person name="Brunak S."/>
            <person name="Mann M."/>
        </authorList>
    </citation>
    <scope>PHOSPHORYLATION [LARGE SCALE ANALYSIS] AT SER-157</scope>
    <scope>IDENTIFICATION BY MASS SPECTROMETRY [LARGE SCALE ANALYSIS]</scope>
    <source>
        <tissue>Cervix carcinoma</tissue>
    </source>
</reference>
<reference key="12">
    <citation type="journal article" date="2011" name="Nat. Struct. Mol. Biol.">
        <title>Structure-function analysis of hRPC62 provides insights into RNA polymerase III transcription initiation.</title>
        <authorList>
            <person name="Lefevre S."/>
            <person name="Dumay-Odelot H."/>
            <person name="El-Ayoubi L."/>
            <person name="Budd A."/>
            <person name="Legrand P."/>
            <person name="Pinaud N."/>
            <person name="Teichmann M."/>
            <person name="Fribourg S."/>
        </authorList>
    </citation>
    <scope>INTERACTION WITH POLR3C</scope>
</reference>
<reference key="13">
    <citation type="journal article" date="2011" name="Sci. Signal.">
        <title>System-wide temporal characterization of the proteome and phosphoproteome of human embryonic stem cell differentiation.</title>
        <authorList>
            <person name="Rigbolt K.T."/>
            <person name="Prokhorova T.A."/>
            <person name="Akimov V."/>
            <person name="Henningsen J."/>
            <person name="Johansen P.T."/>
            <person name="Kratchmarova I."/>
            <person name="Kassem M."/>
            <person name="Mann M."/>
            <person name="Olsen J.V."/>
            <person name="Blagoev B."/>
        </authorList>
    </citation>
    <scope>PHOSPHORYLATION [LARGE SCALE ANALYSIS] AT SER-157</scope>
    <scope>IDENTIFICATION BY MASS SPECTROMETRY [LARGE SCALE ANALYSIS]</scope>
</reference>
<reference key="14">
    <citation type="journal article" date="2011" name="Stem Cells">
        <title>A novel role for an RNA polymerase III subunit POLR3G in regulating pluripotency in human embryonic stem cells.</title>
        <authorList>
            <person name="Wong R.C."/>
            <person name="Pollan S."/>
            <person name="Fong H."/>
            <person name="Ibrahim A."/>
            <person name="Smith E.L."/>
            <person name="Ho M."/>
            <person name="Laslett A.L."/>
            <person name="Donovan P.J."/>
        </authorList>
    </citation>
    <scope>SUBCELLULAR LOCATION</scope>
    <scope>INDUCTION BY NANOG AND POU5F1</scope>
    <scope>DEVELOPMENTAL STAGE</scope>
</reference>
<reference key="15">
    <citation type="journal article" date="2013" name="J. Proteome Res.">
        <title>Toward a comprehensive characterization of a human cancer cell phosphoproteome.</title>
        <authorList>
            <person name="Zhou H."/>
            <person name="Di Palma S."/>
            <person name="Preisinger C."/>
            <person name="Peng M."/>
            <person name="Polat A.N."/>
            <person name="Heck A.J."/>
            <person name="Mohammed S."/>
        </authorList>
    </citation>
    <scope>PHOSPHORYLATION [LARGE SCALE ANALYSIS] AT THR-133</scope>
    <scope>IDENTIFICATION BY MASS SPECTROMETRY [LARGE SCALE ANALYSIS]</scope>
    <source>
        <tissue>Erythroleukemia</tissue>
    </source>
</reference>
<reference key="16">
    <citation type="journal article" date="2014" name="Genome Res.">
        <title>Gene duplication and neofunctionalization: POLR3G and POLR3GL.</title>
        <authorList>
            <person name="Renaud M."/>
            <person name="Praz V."/>
            <person name="Vieu E."/>
            <person name="Florens L."/>
            <person name="Washburn M.P."/>
            <person name="l'Hote P."/>
            <person name="Hernandez N."/>
        </authorList>
    </citation>
    <scope>IDENTIFICATION IN RNA POL III SUBCOMPLEXES</scope>
    <scope>TISSUE SPECIFICITY</scope>
</reference>
<reference key="17">
    <citation type="journal article" date="2015" name="J. Struct. Biol.">
        <title>Structural analysis of human RPC32beta-RPC62 complex.</title>
        <authorList>
            <person name="Boissier F."/>
            <person name="Dumay-Odelot H."/>
            <person name="Teichmann M."/>
            <person name="Fribourg S."/>
        </authorList>
    </citation>
    <scope>INTERACTION WITH POLR3C</scope>
</reference>
<reference key="18">
    <citation type="journal article" date="2016" name="Stem Cells">
        <title>A novel role for miR-1305 in regulation of pluripotency-differentiation balance, cell cycle, and apoptosis in human pluripotent stem cells.</title>
        <authorList>
            <person name="Jin S."/>
            <person name="Collin J."/>
            <person name="Zhu L."/>
            <person name="Montaner D."/>
            <person name="Armstrong L."/>
            <person name="Neganova I."/>
            <person name="Lako M."/>
        </authorList>
    </citation>
    <scope>INDUCTION</scope>
</reference>
<reference key="19">
    <citation type="journal article" date="2017" name="Stem Cell Reports">
        <title>RNA polymerase III subunit POLR3G regulates specific subsets of polyA(+) and smallRNA transcriptomes and splicing in human pluripotent stem cells.</title>
        <authorList>
            <person name="Lund R.J."/>
            <person name="Rahkonen N."/>
            <person name="Malonzo M."/>
            <person name="Kauko L."/>
            <person name="Emani M.R."/>
            <person name="Kivinen V."/>
            <person name="Naervae E."/>
            <person name="Kemppainen E."/>
            <person name="Laiho A."/>
            <person name="Skottman H."/>
            <person name="Hovatta O."/>
            <person name="Rasool O."/>
            <person name="Nykter M."/>
            <person name="Laehdesmaeki H."/>
            <person name="Lahesmaa R."/>
        </authorList>
    </citation>
    <scope>FUNCTION</scope>
    <scope>SUBCELLULAR LOCATION</scope>
    <scope>TISSUE SPECIFICITY</scope>
    <scope>DEVELOPMENTAL STAGE</scope>
</reference>
<reference key="20">
    <citation type="journal article" date="2022" name="Nat. Commun.">
        <title>A cancer-associated RNA polymerase III identity drives robust transcription and expression of snaR-A non-coding RNA.</title>
        <authorList>
            <person name="Van Bortle K."/>
            <person name="Marciano D.P."/>
            <person name="Liu Q."/>
            <person name="Chou T."/>
            <person name="Lipchik A.M."/>
            <person name="Gollapudi S."/>
            <person name="Geller B.S."/>
            <person name="Monte E."/>
            <person name="Kamakaka R.T."/>
            <person name="Snyder M.P."/>
        </authorList>
    </citation>
    <scope>FUNCTION OF POL III</scope>
    <scope>SUBUNIT</scope>
    <scope>INDUCTION BY MYC</scope>
</reference>
<reference key="21">
    <citation type="journal article" date="2020" name="Nat. Commun.">
        <title>Structure of human RNA polymerase III.</title>
        <authorList>
            <person name="Ramsay E.P."/>
            <person name="Abascal-Palacios G."/>
            <person name="Daiss J.L."/>
            <person name="King H."/>
            <person name="Gouge J."/>
            <person name="Pilsl M."/>
            <person name="Beuron F."/>
            <person name="Morris E."/>
            <person name="Gunkel P."/>
            <person name="Engel C."/>
            <person name="Vannini A."/>
        </authorList>
    </citation>
    <scope>STRUCTURE BY ELECTRON MICROSCOPY (4.00 ANGSTROMS)</scope>
    <scope>SUBUNIT</scope>
    <scope>SUBCELLULAR LOCATION</scope>
</reference>
<reference key="22">
    <citation type="journal article" date="2021" name="Cell Res.">
        <title>Structure of human RNA polymerase III elongation complex.</title>
        <authorList>
            <person name="Li L."/>
            <person name="Yu Z."/>
            <person name="Zhao D."/>
            <person name="Ren Y."/>
            <person name="Hou H."/>
            <person name="Xu Y."/>
        </authorList>
    </citation>
    <scope>STRUCTURE BY ELECTRON MICROSCOPY (3.35 ANGSTROMS)</scope>
    <scope>SUBUNIT</scope>
</reference>
<reference key="23">
    <citation type="journal article" date="2021" name="Nat. Commun.">
        <title>Structural insights into RNA polymerase III-mediated transcription termination through trapping poly-deoxythymidine.</title>
        <authorList>
            <person name="Hou H."/>
            <person name="Li Y."/>
            <person name="Wang M."/>
            <person name="Liu A."/>
            <person name="Yu Z."/>
            <person name="Chen K."/>
            <person name="Zhao D."/>
            <person name="Xu Y."/>
        </authorList>
    </citation>
    <scope>STRUCTURE BY ELECTRON MICROSCOPY (3.60 ANGSTROMS)</scope>
    <scope>FUNCTION</scope>
    <scope>SUBUNIT</scope>
</reference>
<reference key="24">
    <citation type="journal article" date="2021" name="Nat. Struct. Mol. Biol.">
        <title>Cryo-EM structures of human RNA polymerase III in its unbound and transcribing states.</title>
        <authorList>
            <person name="Girbig M."/>
            <person name="Misiaszek A.D."/>
            <person name="Vorlander M.K."/>
            <person name="Lafita A."/>
            <person name="Grotsch H."/>
            <person name="Baudin F."/>
            <person name="Bateman A."/>
            <person name="Muller C.W."/>
        </authorList>
    </citation>
    <scope>STRUCTURE BY ELECTRON MICROSCOPY (2.80 ANGSTROMS)</scope>
    <scope>FUNCTION</scope>
    <scope>SUBUNIT</scope>
</reference>
<reference key="25">
    <citation type="journal article" date="2021" name="Nat. Struct. Mol. Biol.">
        <title>Structural insights into transcriptional regulation of human RNA polymerase III.</title>
        <authorList>
            <person name="Wang Q."/>
            <person name="Li S."/>
            <person name="Wan F."/>
            <person name="Xu Y."/>
            <person name="Wu Z."/>
            <person name="Cao M."/>
            <person name="Lan P."/>
            <person name="Lei M."/>
            <person name="Wu J."/>
        </authorList>
    </citation>
    <scope>STRUCTURE BY ELECTRON MICROSCOPY (2.90 ANGSTROMS)</scope>
    <scope>SUBUNIT</scope>
</reference>
<evidence type="ECO:0000250" key="1"/>
<evidence type="ECO:0000250" key="2">
    <source>
        <dbReference type="UniProtKB" id="Q6NXY9"/>
    </source>
</evidence>
<evidence type="ECO:0000256" key="3">
    <source>
        <dbReference type="SAM" id="MobiDB-lite"/>
    </source>
</evidence>
<evidence type="ECO:0000269" key="4">
    <source>
    </source>
</evidence>
<evidence type="ECO:0000269" key="5">
    <source>
    </source>
</evidence>
<evidence type="ECO:0000269" key="6">
    <source>
    </source>
</evidence>
<evidence type="ECO:0000269" key="7">
    <source>
    </source>
</evidence>
<evidence type="ECO:0000269" key="8">
    <source>
    </source>
</evidence>
<evidence type="ECO:0000269" key="9">
    <source>
    </source>
</evidence>
<evidence type="ECO:0000269" key="10">
    <source>
    </source>
</evidence>
<evidence type="ECO:0000269" key="11">
    <source>
    </source>
</evidence>
<evidence type="ECO:0000269" key="12">
    <source>
    </source>
</evidence>
<evidence type="ECO:0000269" key="13">
    <source>
    </source>
</evidence>
<evidence type="ECO:0000269" key="14">
    <source>
    </source>
</evidence>
<evidence type="ECO:0000269" key="15">
    <source>
    </source>
</evidence>
<evidence type="ECO:0000269" key="16">
    <source>
    </source>
</evidence>
<evidence type="ECO:0000269" key="17">
    <source>
    </source>
</evidence>
<evidence type="ECO:0000269" key="18">
    <source>
    </source>
</evidence>
<evidence type="ECO:0000269" key="19">
    <source>
    </source>
</evidence>
<evidence type="ECO:0000269" key="20">
    <source>
    </source>
</evidence>
<evidence type="ECO:0000303" key="21">
    <source>
    </source>
</evidence>
<evidence type="ECO:0000305" key="22"/>
<evidence type="ECO:0000312" key="23">
    <source>
        <dbReference type="HGNC" id="HGNC:30075"/>
    </source>
</evidence>
<evidence type="ECO:0007744" key="24">
    <source>
    </source>
</evidence>
<evidence type="ECO:0007744" key="25">
    <source>
    </source>
</evidence>
<evidence type="ECO:0007744" key="26">
    <source>
    </source>
</evidence>
<evidence type="ECO:0007744" key="27">
    <source>
    </source>
</evidence>
<evidence type="ECO:0007829" key="28">
    <source>
        <dbReference type="PDB" id="7AE1"/>
    </source>
</evidence>
<evidence type="ECO:0007829" key="29">
    <source>
        <dbReference type="PDB" id="7D58"/>
    </source>
</evidence>
<evidence type="ECO:0007829" key="30">
    <source>
        <dbReference type="PDB" id="7D59"/>
    </source>
</evidence>
<evidence type="ECO:0007829" key="31">
    <source>
        <dbReference type="PDB" id="7DU2"/>
    </source>
</evidence>
<proteinExistence type="evidence at protein level"/>
<accession>O15318</accession>
<accession>A8MTH0</accession>
<organism>
    <name type="scientific">Homo sapiens</name>
    <name type="common">Human</name>
    <dbReference type="NCBI Taxonomy" id="9606"/>
    <lineage>
        <taxon>Eukaryota</taxon>
        <taxon>Metazoa</taxon>
        <taxon>Chordata</taxon>
        <taxon>Craniata</taxon>
        <taxon>Vertebrata</taxon>
        <taxon>Euteleostomi</taxon>
        <taxon>Mammalia</taxon>
        <taxon>Eutheria</taxon>
        <taxon>Euarchontoglires</taxon>
        <taxon>Primates</taxon>
        <taxon>Haplorrhini</taxon>
        <taxon>Catarrhini</taxon>
        <taxon>Hominidae</taxon>
        <taxon>Homo</taxon>
    </lineage>
</organism>
<comment type="function">
    <text evidence="5 6 7 8 16 17 19 20">DNA-dependent RNA polymerase catalyzes the transcription of DNA into RNA using the four ribonucleoside triphosphates as substrates (PubMed:20413673, PubMed:33558764, PubMed:34675218, PubMed:35637192). Specific peripheric component of RNA polymerase III (Pol III) which synthesizes small non-coding RNAs including 5S rRNA, snRNAs, tRNAs and miRNAs from at least 500 distinct genomic loci (PubMed:20154270, PubMed:20413673, PubMed:35637192). Acts as a long tether that bridges POLR3C/RPC3-POLR3F/RPC6-POLR3G/RPC7 heterotrimer and the mobile stalk of Pol III, coordinating the dynamics of Pol III stalk and clamp modules during the transition from apo to elongation state. Pol III exists as two alternative complexes defined by the mutually exclusive incorporation of subunit POLR3G/RPC7alpha or POLR3GL/RPC7beta. POLR3G/RPC7alpha modulates Pol III transcriptome by specifically enhancing the transcription of snaR-A non-coding RNAs. At resting state, occupies the active site of apo Pol III and keeps Pol III in an autoinhibitory mode, preventing non-specific transcription (PubMed:33558764, PubMed:33558766, PubMed:35637192). Pol III plays a key role in sensing and limiting infection by intracellular bacteria and DNA viruses. Acts as a nuclear and cytosolic DNA sensor involved in innate immune response. Can sense non-self dsDNA that serves as template for transcription into dsRNA. The non-self RNA polymerase III transcripts, such as Epstein-Barr virus-encoded RNAs (EBERs), induce type I interferon and NF-kappa-B through the RIG-I pathway (PubMed:19609254, PubMed:19631370).</text>
</comment>
<comment type="subunit">
    <text evidence="1 4 9 11 12 15 16 17 18 19 20">Component of the RNA polymerase III complex consisting of 17 subunits: a ten-subunit horseshoe-shaped catalytic core composed of POLR3A/RPC1, POLR3B/RPC2, POLR1C/RPAC1, POLR1D/RPAC2, POLR3K/RPC10, POLR2E/RPABC1, POLR2F/RPABC2, POLR2H/RPABC3, POLR2K/RPABC4 and POLR2L/RPABC5; a mobile stalk composed of two subunits POLR3H/RPC8 and CRCP/RPC9, protruding from the core and functioning primarily in transcription initiation; and additional subunits homologous to general transcription factors of the RNA polymerase II machinery, POLR3C/RPC3-POLR3F/RPC6-POLR3G/RPC7 heterotrimer required for transcription initiation and POLR3D/RPC4-POLR3E/RPC5 heterodimer involved in both transcription initiation and termination (PubMed:12391170, PubMed:33335104, PubMed:33558764, PubMed:33558766, PubMed:33674783, PubMed:34675218, PubMed:35637192). Directly interacts with POLR3C/RPC62 (PubMed:21358628, PubMed:24107381, PubMed:26394183). Also found in a trimeric complex with POLR3C/RPC3 and POLR3GL (PubMed:24107381).</text>
</comment>
<comment type="interaction">
    <interactant intactId="EBI-12362221">
        <id>O15318</id>
    </interactant>
    <interactant intactId="EBI-5452779">
        <id>Q9BUI4</id>
        <label>POLR3C</label>
    </interactant>
    <organismsDiffer>false</organismsDiffer>
    <experiments>9</experiments>
</comment>
<comment type="interaction">
    <interactant intactId="EBI-12362221">
        <id>O15318</id>
    </interactant>
    <interactant intactId="EBI-710067">
        <id>Q9H1D9</id>
        <label>POLR3F</label>
    </interactant>
    <organismsDiffer>false</organismsDiffer>
    <experiments>5</experiments>
</comment>
<comment type="subcellular location">
    <subcellularLocation>
        <location evidence="7 10 15">Nucleus</location>
    </subcellularLocation>
    <subcellularLocation>
        <location evidence="2">Cytoplasm</location>
    </subcellularLocation>
    <text evidence="2 10">Excluded from nucleoli (PubMed:21898682). In zygotes and the 2-cell stage embryos, mainly in the cytoplasm. Starts to localize to the nucleus in the 8-16 cell stage embryo and early blastocysts (By similarity).</text>
</comment>
<comment type="tissue specificity">
    <text evidence="7 11 14">Barely detectable in differentiated tissues. Expressed in embryonic stem cells and in other dividing cells, such as some tumor cell lines.</text>
</comment>
<comment type="developmental stage">
    <text evidence="7 10 14">Down-regulated in embryonic stem cells upon differentiation into embroid bodies (at protein level) (PubMed:20154270, PubMed:21898682, PubMed:28494942). An analogous down-regulation is observed during differentiation of induced pluripotent stem cells (PubMed:21898682).</text>
</comment>
<comment type="induction">
    <text evidence="10 13 20">Induced by NANOG and POU5F1/OCT4 (PubMed:21898682). Negatively regulated by the interaction of microRNA MIR1305 with 3 miRNA responsive elements (miREs) in its 3'-UTR (PubMed:27339422). Transcriptionally regulated by MYC. down-regulated upon cell differentiation.</text>
</comment>
<comment type="similarity">
    <text evidence="22">Belongs to the eukaryotic RPC7 RNA polymerase subunit family.</text>
</comment>
<comment type="sequence caution" evidence="22">
    <conflict type="frameshift">
        <sequence resource="EMBL-CDS" id="AAB63676"/>
    </conflict>
</comment>